<comment type="function">
    <text evidence="1">DNA-dependent RNA polymerase catalyzes the transcription of DNA into RNA using the four ribonucleoside triphosphates as substrates.</text>
</comment>
<comment type="catalytic activity">
    <reaction evidence="1">
        <text>RNA(n) + a ribonucleoside 5'-triphosphate = RNA(n+1) + diphosphate</text>
        <dbReference type="Rhea" id="RHEA:21248"/>
        <dbReference type="Rhea" id="RHEA-COMP:14527"/>
        <dbReference type="Rhea" id="RHEA-COMP:17342"/>
        <dbReference type="ChEBI" id="CHEBI:33019"/>
        <dbReference type="ChEBI" id="CHEBI:61557"/>
        <dbReference type="ChEBI" id="CHEBI:140395"/>
        <dbReference type="EC" id="2.7.7.6"/>
    </reaction>
</comment>
<comment type="subunit">
    <text evidence="1">The RNAP catalytic core consists of 2 alpha, 1 beta, 1 beta' and 1 omega subunit. When a sigma factor is associated with the core the holoenzyme is formed, which can initiate transcription.</text>
</comment>
<comment type="similarity">
    <text evidence="1">Belongs to the RNA polymerase beta chain family.</text>
</comment>
<sequence length="1343" mass="149784">MGYSYSEKKRIRKDFGKRPQVLNVPYLLTIQLDSFDKFIQKDPEGQQGLEAAFRSVFPIVSNNGYTELQYVDYRLEEPEFDVRECQIRGSTYAAGLRVKLRLVSYDKESSSRAVKDIKENEVYMGEIPLMTDNGTFVINGTERVIVSQLHRSPGVFFDSDKGKTHSSGKVLYNARIIPYRGSWLDFEFDPKDNLFARIDRRRKLPATIILRALGYTTEEILNLFFDKITFEIAGDKLLMTLVPERLRGETASFDIEANGKVYVERGRRITARHIKALEKDNISQVVVPSEYILGKVASKDYVDLESGEIICPANGEISLETLAKLAQAGYTTIETLFTNDLDYGPYISETLRVDPTYDKTSALYEIYRMMRPGEPPTPESSEALFNNLFFSAERYDLSTVGRMKFNRSLAFPEGEGAGILSNEDIIAVMRKLIDIRNGRGEVDDIDHLGNRRIRSVGEMAENQFRIGLVRVERAVKERLSLGDLDAITPQDLINPKPISAAVKEFFGSSQLSQFMDQNNPLSEVTHKRRISALGPGGLTRERAGFEVRDVHNTHYGRLCPIETPEGPNIGLINSLSAFARTNDYGFLETPYRKVVDGQVTEEIEYLSVIDEANYIIAQANSNLDENNRFTDAFVTARGERGESGLYKPEDIHYMDVSTQQVVSVAAALIPFLEHDDANRALMGANMQRQAVPTLRADKPLVGTGMEKPIALDSGVAVVAKRGGTVQYVDASRIVIKVNEDETIAGEAGIDIYNLIKYTRSNQNTCINQIPCVNLGDPINRGEVLADGPSTDLGELALGQNIRVAFMPWNGYNFEDSMLVSERVVQQDRFTTIHIQELSCVARDTKLGAEEITADIPNVGESALSKLDESGIVYVGAEVKGGDILVGKVTPKGETQLTPEEKLLRAIFGEKASDVKDSSLRVPNGTSGTVIDVQVFTRDGVEKDKRALEIEEMQLREAKKDLTEELEILEAGLFARVRNLLISSGADAAQLDKLDRTKWLEQTIADEEKQNQLEQLAEQYEELRKEFEHKLEVKRKKIIKGDDLAPGVLKVVKVYLAVKRQIQPGDKMAGRHGNKGVISKINPVEDMPYDENGQPVEIVLNPLGVPSRMNIGQILETHLGLAAKGIGDQINAMLKQKQEVEKLRSYIQKAYDLLGNGSQKVDLSTFTDEEVLRLAGNLRKGLPVATPVFDGADEAEIKELLKLGGLPTSGQITLYDGRTGEKFERPVTVGYMYMLKLNHLVDDKMHARSTGSYSLVTQQPLGGKAQFGGQRFGEMEVWALEAYGAAYTLQEMLTVKSDDVNGRTKMYKNIVSGNQHMEPGTPESFNVIMKEIRSLGLNIELDEE</sequence>
<feature type="chain" id="PRO_0000047906" description="DNA-directed RNA polymerase subunit beta">
    <location>
        <begin position="1"/>
        <end position="1343"/>
    </location>
</feature>
<evidence type="ECO:0000255" key="1">
    <source>
        <dbReference type="HAMAP-Rule" id="MF_01321"/>
    </source>
</evidence>
<name>RPOB_HAEIN</name>
<organism>
    <name type="scientific">Haemophilus influenzae (strain ATCC 51907 / DSM 11121 / KW20 / Rd)</name>
    <dbReference type="NCBI Taxonomy" id="71421"/>
    <lineage>
        <taxon>Bacteria</taxon>
        <taxon>Pseudomonadati</taxon>
        <taxon>Pseudomonadota</taxon>
        <taxon>Gammaproteobacteria</taxon>
        <taxon>Pasteurellales</taxon>
        <taxon>Pasteurellaceae</taxon>
        <taxon>Haemophilus</taxon>
    </lineage>
</organism>
<keyword id="KW-0240">DNA-directed RNA polymerase</keyword>
<keyword id="KW-0548">Nucleotidyltransferase</keyword>
<keyword id="KW-1185">Reference proteome</keyword>
<keyword id="KW-0804">Transcription</keyword>
<keyword id="KW-0808">Transferase</keyword>
<protein>
    <recommendedName>
        <fullName evidence="1">DNA-directed RNA polymerase subunit beta</fullName>
        <shortName evidence="1">RNAP subunit beta</shortName>
        <ecNumber evidence="1">2.7.7.6</ecNumber>
    </recommendedName>
    <alternativeName>
        <fullName evidence="1">RNA polymerase subunit beta</fullName>
    </alternativeName>
    <alternativeName>
        <fullName evidence="1">Transcriptase subunit beta</fullName>
    </alternativeName>
</protein>
<reference key="1">
    <citation type="journal article" date="1995" name="Science">
        <title>Whole-genome random sequencing and assembly of Haemophilus influenzae Rd.</title>
        <authorList>
            <person name="Fleischmann R.D."/>
            <person name="Adams M.D."/>
            <person name="White O."/>
            <person name="Clayton R.A."/>
            <person name="Kirkness E.F."/>
            <person name="Kerlavage A.R."/>
            <person name="Bult C.J."/>
            <person name="Tomb J.-F."/>
            <person name="Dougherty B.A."/>
            <person name="Merrick J.M."/>
            <person name="McKenney K."/>
            <person name="Sutton G.G."/>
            <person name="FitzHugh W."/>
            <person name="Fields C.A."/>
            <person name="Gocayne J.D."/>
            <person name="Scott J.D."/>
            <person name="Shirley R."/>
            <person name="Liu L.-I."/>
            <person name="Glodek A."/>
            <person name="Kelley J.M."/>
            <person name="Weidman J.F."/>
            <person name="Phillips C.A."/>
            <person name="Spriggs T."/>
            <person name="Hedblom E."/>
            <person name="Cotton M.D."/>
            <person name="Utterback T.R."/>
            <person name="Hanna M.C."/>
            <person name="Nguyen D.T."/>
            <person name="Saudek D.M."/>
            <person name="Brandon R.C."/>
            <person name="Fine L.D."/>
            <person name="Fritchman J.L."/>
            <person name="Fuhrmann J.L."/>
            <person name="Geoghagen N.S.M."/>
            <person name="Gnehm C.L."/>
            <person name="McDonald L.A."/>
            <person name="Small K.V."/>
            <person name="Fraser C.M."/>
            <person name="Smith H.O."/>
            <person name="Venter J.C."/>
        </authorList>
    </citation>
    <scope>NUCLEOTIDE SEQUENCE [LARGE SCALE GENOMIC DNA]</scope>
    <source>
        <strain>ATCC 51907 / DSM 11121 / KW20 / Rd</strain>
    </source>
</reference>
<gene>
    <name evidence="1" type="primary">rpoB</name>
    <name type="ordered locus">HI_0515</name>
</gene>
<accession>P43738</accession>
<proteinExistence type="inferred from homology"/>
<dbReference type="EC" id="2.7.7.6" evidence="1"/>
<dbReference type="EMBL" id="L42023">
    <property type="protein sequence ID" value="AAC22173.1"/>
    <property type="molecule type" value="Genomic_DNA"/>
</dbReference>
<dbReference type="PIR" id="H64073">
    <property type="entry name" value="H64073"/>
</dbReference>
<dbReference type="RefSeq" id="NP_438673.1">
    <property type="nucleotide sequence ID" value="NC_000907.1"/>
</dbReference>
<dbReference type="SMR" id="P43738"/>
<dbReference type="STRING" id="71421.HI_0515"/>
<dbReference type="EnsemblBacteria" id="AAC22173">
    <property type="protein sequence ID" value="AAC22173"/>
    <property type="gene ID" value="HI_0515"/>
</dbReference>
<dbReference type="KEGG" id="hin:HI_0515"/>
<dbReference type="PATRIC" id="fig|71421.8.peg.534"/>
<dbReference type="eggNOG" id="COG0085">
    <property type="taxonomic scope" value="Bacteria"/>
</dbReference>
<dbReference type="HOGENOM" id="CLU_000524_4_0_6"/>
<dbReference type="OrthoDB" id="9803954at2"/>
<dbReference type="PhylomeDB" id="P43738"/>
<dbReference type="BioCyc" id="HINF71421:G1GJ1-528-MONOMER"/>
<dbReference type="Proteomes" id="UP000000579">
    <property type="component" value="Chromosome"/>
</dbReference>
<dbReference type="GO" id="GO:0000428">
    <property type="term" value="C:DNA-directed RNA polymerase complex"/>
    <property type="evidence" value="ECO:0007669"/>
    <property type="project" value="UniProtKB-KW"/>
</dbReference>
<dbReference type="GO" id="GO:0003677">
    <property type="term" value="F:DNA binding"/>
    <property type="evidence" value="ECO:0007669"/>
    <property type="project" value="UniProtKB-UniRule"/>
</dbReference>
<dbReference type="GO" id="GO:0003899">
    <property type="term" value="F:DNA-directed RNA polymerase activity"/>
    <property type="evidence" value="ECO:0007669"/>
    <property type="project" value="UniProtKB-UniRule"/>
</dbReference>
<dbReference type="GO" id="GO:0032549">
    <property type="term" value="F:ribonucleoside binding"/>
    <property type="evidence" value="ECO:0007669"/>
    <property type="project" value="InterPro"/>
</dbReference>
<dbReference type="GO" id="GO:0006351">
    <property type="term" value="P:DNA-templated transcription"/>
    <property type="evidence" value="ECO:0007669"/>
    <property type="project" value="UniProtKB-UniRule"/>
</dbReference>
<dbReference type="CDD" id="cd00653">
    <property type="entry name" value="RNA_pol_B_RPB2"/>
    <property type="match status" value="1"/>
</dbReference>
<dbReference type="FunFam" id="2.40.270.10:FF:000004">
    <property type="entry name" value="DNA-directed RNA polymerase subunit beta"/>
    <property type="match status" value="1"/>
</dbReference>
<dbReference type="FunFam" id="2.40.50.100:FF:000006">
    <property type="entry name" value="DNA-directed RNA polymerase subunit beta"/>
    <property type="match status" value="1"/>
</dbReference>
<dbReference type="FunFam" id="2.40.50.150:FF:000001">
    <property type="entry name" value="DNA-directed RNA polymerase subunit beta"/>
    <property type="match status" value="1"/>
</dbReference>
<dbReference type="FunFam" id="3.90.1100.10:FF:000002">
    <property type="entry name" value="DNA-directed RNA polymerase subunit beta"/>
    <property type="match status" value="1"/>
</dbReference>
<dbReference type="FunFam" id="3.90.1110.10:FF:000001">
    <property type="entry name" value="DNA-directed RNA polymerase subunit beta"/>
    <property type="match status" value="1"/>
</dbReference>
<dbReference type="FunFam" id="3.90.1110.10:FF:000004">
    <property type="entry name" value="DNA-directed RNA polymerase subunit beta"/>
    <property type="match status" value="1"/>
</dbReference>
<dbReference type="FunFam" id="3.90.1800.10:FF:000001">
    <property type="entry name" value="DNA-directed RNA polymerase subunit beta"/>
    <property type="match status" value="1"/>
</dbReference>
<dbReference type="Gene3D" id="2.40.50.100">
    <property type="match status" value="1"/>
</dbReference>
<dbReference type="Gene3D" id="2.40.50.150">
    <property type="match status" value="1"/>
</dbReference>
<dbReference type="Gene3D" id="3.90.1100.10">
    <property type="match status" value="2"/>
</dbReference>
<dbReference type="Gene3D" id="2.30.150.10">
    <property type="entry name" value="DNA-directed RNA polymerase, beta subunit, external 1 domain"/>
    <property type="match status" value="1"/>
</dbReference>
<dbReference type="Gene3D" id="2.40.270.10">
    <property type="entry name" value="DNA-directed RNA polymerase, subunit 2, domain 6"/>
    <property type="match status" value="2"/>
</dbReference>
<dbReference type="Gene3D" id="3.90.1800.10">
    <property type="entry name" value="RNA polymerase alpha subunit dimerisation domain"/>
    <property type="match status" value="1"/>
</dbReference>
<dbReference type="Gene3D" id="3.90.1110.10">
    <property type="entry name" value="RNA polymerase Rpb2, domain 2"/>
    <property type="match status" value="2"/>
</dbReference>
<dbReference type="HAMAP" id="MF_01321">
    <property type="entry name" value="RNApol_bact_RpoB"/>
    <property type="match status" value="1"/>
</dbReference>
<dbReference type="InterPro" id="IPR042107">
    <property type="entry name" value="DNA-dir_RNA_pol_bsu_ext_1_sf"/>
</dbReference>
<dbReference type="InterPro" id="IPR019462">
    <property type="entry name" value="DNA-dir_RNA_pol_bsu_external_1"/>
</dbReference>
<dbReference type="InterPro" id="IPR015712">
    <property type="entry name" value="DNA-dir_RNA_pol_su2"/>
</dbReference>
<dbReference type="InterPro" id="IPR007120">
    <property type="entry name" value="DNA-dir_RNAP_su2_dom"/>
</dbReference>
<dbReference type="InterPro" id="IPR037033">
    <property type="entry name" value="DNA-dir_RNAP_su2_hyb_sf"/>
</dbReference>
<dbReference type="InterPro" id="IPR010243">
    <property type="entry name" value="RNA_pol_bsu_bac"/>
</dbReference>
<dbReference type="InterPro" id="IPR007121">
    <property type="entry name" value="RNA_pol_bsu_CS"/>
</dbReference>
<dbReference type="InterPro" id="IPR007644">
    <property type="entry name" value="RNA_pol_bsu_protrusion"/>
</dbReference>
<dbReference type="InterPro" id="IPR007642">
    <property type="entry name" value="RNA_pol_Rpb2_2"/>
</dbReference>
<dbReference type="InterPro" id="IPR037034">
    <property type="entry name" value="RNA_pol_Rpb2_2_sf"/>
</dbReference>
<dbReference type="InterPro" id="IPR007645">
    <property type="entry name" value="RNA_pol_Rpb2_3"/>
</dbReference>
<dbReference type="InterPro" id="IPR007641">
    <property type="entry name" value="RNA_pol_Rpb2_7"/>
</dbReference>
<dbReference type="InterPro" id="IPR014724">
    <property type="entry name" value="RNA_pol_RPB2_OB-fold"/>
</dbReference>
<dbReference type="NCBIfam" id="NF001616">
    <property type="entry name" value="PRK00405.1"/>
    <property type="match status" value="1"/>
</dbReference>
<dbReference type="NCBIfam" id="TIGR02013">
    <property type="entry name" value="rpoB"/>
    <property type="match status" value="1"/>
</dbReference>
<dbReference type="PANTHER" id="PTHR20856">
    <property type="entry name" value="DNA-DIRECTED RNA POLYMERASE I SUBUNIT 2"/>
    <property type="match status" value="1"/>
</dbReference>
<dbReference type="Pfam" id="PF04563">
    <property type="entry name" value="RNA_pol_Rpb2_1"/>
    <property type="match status" value="1"/>
</dbReference>
<dbReference type="Pfam" id="PF04561">
    <property type="entry name" value="RNA_pol_Rpb2_2"/>
    <property type="match status" value="2"/>
</dbReference>
<dbReference type="Pfam" id="PF04565">
    <property type="entry name" value="RNA_pol_Rpb2_3"/>
    <property type="match status" value="1"/>
</dbReference>
<dbReference type="Pfam" id="PF10385">
    <property type="entry name" value="RNA_pol_Rpb2_45"/>
    <property type="match status" value="1"/>
</dbReference>
<dbReference type="Pfam" id="PF00562">
    <property type="entry name" value="RNA_pol_Rpb2_6"/>
    <property type="match status" value="1"/>
</dbReference>
<dbReference type="Pfam" id="PF04560">
    <property type="entry name" value="RNA_pol_Rpb2_7"/>
    <property type="match status" value="1"/>
</dbReference>
<dbReference type="SUPFAM" id="SSF64484">
    <property type="entry name" value="beta and beta-prime subunits of DNA dependent RNA-polymerase"/>
    <property type="match status" value="1"/>
</dbReference>
<dbReference type="PROSITE" id="PS01166">
    <property type="entry name" value="RNA_POL_BETA"/>
    <property type="match status" value="1"/>
</dbReference>